<gene>
    <name evidence="1" type="primary">rlmL</name>
    <name type="ordered locus">Spro_1743</name>
</gene>
<name>RLMKL_SERP5</name>
<organism>
    <name type="scientific">Serratia proteamaculans (strain 568)</name>
    <dbReference type="NCBI Taxonomy" id="399741"/>
    <lineage>
        <taxon>Bacteria</taxon>
        <taxon>Pseudomonadati</taxon>
        <taxon>Pseudomonadota</taxon>
        <taxon>Gammaproteobacteria</taxon>
        <taxon>Enterobacterales</taxon>
        <taxon>Yersiniaceae</taxon>
        <taxon>Serratia</taxon>
    </lineage>
</organism>
<sequence length="706" mass="79303">MNSLFASTARGLEELLKSELEALGAHACKVVQGGVHFQGDDRLLYQSLLWSRLASRILLPLNEFRVHSDLDLYLGVQAIDWTSIFGVDKTFAVHFSGVNEEIRNSQYGALKVKDAIVDSFTRKIEQRPTVAKQQPDIRVNVFLQRDMASVALDLSGEGLHQRGYRDLTGQAPLKESLAAAIVQRSGWQPGTPMLDPMCGSGTLLIEAAMIASDRAPGLHRQHWGFTAWNGHNVDLWREVITEAQVRARRGLQETTSRFFGSDIDRRVIEMARGNARRAGVAELITFNVNDVAKLTNPLPEGPTGTVVCNPPYGERLESEPALIALHNMLGRIMKSAFGGWQLSLFSASPELLSCLQLRAERQFKAKNGPLDCVQKNYQLAENPLGAGGVQVAEDFANRLRKNLKKLDKWAKQQGIECYRLYDADLPEYNVAVDRYGSKVVVQEYAPPKTIDAQKARQRLFDVINATLAVLELPSNQLILKTRERQKGKNQYEKLAQKGEFLLVEEFNAKLWVNLTDYLDTGLFLDHRIARRMLGEMSKGKDFLNLFAYTGTASVHAGLGGARSTTTVDMSRTYLEWAEKNLRVNGLTGKQHRLIHADCLSWMQNADEQFDVIFIDPPTFSNSKRMENTFDVQRDHLALMQDLKRLLRRNGTIMFSNNKRGFQMDMAGLSALGLEAKEITAQTQSQDFARNRQIHNCWLLTHAGEGK</sequence>
<proteinExistence type="inferred from homology"/>
<dbReference type="EC" id="2.1.1.173" evidence="1"/>
<dbReference type="EC" id="2.1.1.264" evidence="1"/>
<dbReference type="EMBL" id="CP000826">
    <property type="protein sequence ID" value="ABV40847.1"/>
    <property type="molecule type" value="Genomic_DNA"/>
</dbReference>
<dbReference type="SMR" id="A8GCK7"/>
<dbReference type="STRING" id="399741.Spro_1743"/>
<dbReference type="KEGG" id="spe:Spro_1743"/>
<dbReference type="eggNOG" id="COG0116">
    <property type="taxonomic scope" value="Bacteria"/>
</dbReference>
<dbReference type="eggNOG" id="COG1092">
    <property type="taxonomic scope" value="Bacteria"/>
</dbReference>
<dbReference type="HOGENOM" id="CLU_014042_2_0_6"/>
<dbReference type="OrthoDB" id="9809404at2"/>
<dbReference type="GO" id="GO:0005737">
    <property type="term" value="C:cytoplasm"/>
    <property type="evidence" value="ECO:0007669"/>
    <property type="project" value="UniProtKB-SubCell"/>
</dbReference>
<dbReference type="GO" id="GO:0052915">
    <property type="term" value="F:23S rRNA (guanine(2445)-N(2))-methyltransferase activity"/>
    <property type="evidence" value="ECO:0007669"/>
    <property type="project" value="UniProtKB-UniRule"/>
</dbReference>
<dbReference type="GO" id="GO:0003723">
    <property type="term" value="F:RNA binding"/>
    <property type="evidence" value="ECO:0007669"/>
    <property type="project" value="UniProtKB-KW"/>
</dbReference>
<dbReference type="GO" id="GO:0070043">
    <property type="term" value="F:rRNA (guanine-N7-)-methyltransferase activity"/>
    <property type="evidence" value="ECO:0007669"/>
    <property type="project" value="UniProtKB-UniRule"/>
</dbReference>
<dbReference type="CDD" id="cd02440">
    <property type="entry name" value="AdoMet_MTases"/>
    <property type="match status" value="1"/>
</dbReference>
<dbReference type="CDD" id="cd11715">
    <property type="entry name" value="THUMP_AdoMetMT"/>
    <property type="match status" value="1"/>
</dbReference>
<dbReference type="FunFam" id="3.30.750.80:FF:000001">
    <property type="entry name" value="Ribosomal RNA large subunit methyltransferase K/L"/>
    <property type="match status" value="1"/>
</dbReference>
<dbReference type="FunFam" id="3.40.50.150:FF:000039">
    <property type="entry name" value="Ribosomal RNA large subunit methyltransferase K/L"/>
    <property type="match status" value="1"/>
</dbReference>
<dbReference type="Gene3D" id="3.30.2130.30">
    <property type="match status" value="1"/>
</dbReference>
<dbReference type="Gene3D" id="3.30.750.80">
    <property type="entry name" value="RNA methyltransferase domain (HRMD) like"/>
    <property type="match status" value="1"/>
</dbReference>
<dbReference type="Gene3D" id="3.40.50.150">
    <property type="entry name" value="Vaccinia Virus protein VP39"/>
    <property type="match status" value="2"/>
</dbReference>
<dbReference type="HAMAP" id="MF_01858">
    <property type="entry name" value="23SrRNA_methyltr_KL"/>
    <property type="match status" value="1"/>
</dbReference>
<dbReference type="InterPro" id="IPR017244">
    <property type="entry name" value="23SrRNA_methyltr_KL"/>
</dbReference>
<dbReference type="InterPro" id="IPR002052">
    <property type="entry name" value="DNA_methylase_N6_adenine_CS"/>
</dbReference>
<dbReference type="InterPro" id="IPR000241">
    <property type="entry name" value="RlmKL-like_Mtase"/>
</dbReference>
<dbReference type="InterPro" id="IPR053943">
    <property type="entry name" value="RlmKL-like_Mtase_CS"/>
</dbReference>
<dbReference type="InterPro" id="IPR054170">
    <property type="entry name" value="RlmL_1st"/>
</dbReference>
<dbReference type="InterPro" id="IPR019614">
    <property type="entry name" value="SAM-dep_methyl-trfase"/>
</dbReference>
<dbReference type="InterPro" id="IPR029063">
    <property type="entry name" value="SAM-dependent_MTases_sf"/>
</dbReference>
<dbReference type="InterPro" id="IPR004114">
    <property type="entry name" value="THUMP_dom"/>
</dbReference>
<dbReference type="NCBIfam" id="NF008748">
    <property type="entry name" value="PRK11783.1"/>
    <property type="match status" value="1"/>
</dbReference>
<dbReference type="PANTHER" id="PTHR47313">
    <property type="entry name" value="RIBOSOMAL RNA LARGE SUBUNIT METHYLTRANSFERASE K/L"/>
    <property type="match status" value="1"/>
</dbReference>
<dbReference type="PANTHER" id="PTHR47313:SF1">
    <property type="entry name" value="RIBOSOMAL RNA LARGE SUBUNIT METHYLTRANSFERASE K_L"/>
    <property type="match status" value="1"/>
</dbReference>
<dbReference type="Pfam" id="PF10672">
    <property type="entry name" value="Methyltrans_SAM"/>
    <property type="match status" value="1"/>
</dbReference>
<dbReference type="Pfam" id="PF22020">
    <property type="entry name" value="RlmL_1st"/>
    <property type="match status" value="1"/>
</dbReference>
<dbReference type="Pfam" id="PF02926">
    <property type="entry name" value="THUMP"/>
    <property type="match status" value="1"/>
</dbReference>
<dbReference type="Pfam" id="PF01170">
    <property type="entry name" value="UPF0020"/>
    <property type="match status" value="1"/>
</dbReference>
<dbReference type="PIRSF" id="PIRSF037618">
    <property type="entry name" value="RNA_Mtase_bacteria_prd"/>
    <property type="match status" value="1"/>
</dbReference>
<dbReference type="SMART" id="SM00981">
    <property type="entry name" value="THUMP"/>
    <property type="match status" value="1"/>
</dbReference>
<dbReference type="SUPFAM" id="SSF53335">
    <property type="entry name" value="S-adenosyl-L-methionine-dependent methyltransferases"/>
    <property type="match status" value="2"/>
</dbReference>
<dbReference type="PROSITE" id="PS51165">
    <property type="entry name" value="THUMP"/>
    <property type="match status" value="1"/>
</dbReference>
<dbReference type="PROSITE" id="PS01261">
    <property type="entry name" value="UPF0020"/>
    <property type="match status" value="1"/>
</dbReference>
<protein>
    <recommendedName>
        <fullName evidence="1">Ribosomal RNA large subunit methyltransferase K/L</fullName>
    </recommendedName>
    <domain>
        <recommendedName>
            <fullName evidence="1">23S rRNA m2G2445 methyltransferase</fullName>
            <ecNumber evidence="1">2.1.1.173</ecNumber>
        </recommendedName>
        <alternativeName>
            <fullName evidence="1">rRNA (guanine-N(2)-)-methyltransferase RlmL</fullName>
        </alternativeName>
    </domain>
    <domain>
        <recommendedName>
            <fullName evidence="1">23S rRNA m7G2069 methyltransferase</fullName>
            <ecNumber evidence="1">2.1.1.264</ecNumber>
        </recommendedName>
        <alternativeName>
            <fullName evidence="1">rRNA (guanine-N(7)-)-methyltransferase RlmK</fullName>
        </alternativeName>
    </domain>
</protein>
<feature type="chain" id="PRO_0000366818" description="Ribosomal RNA large subunit methyltransferase K/L">
    <location>
        <begin position="1"/>
        <end position="706"/>
    </location>
</feature>
<feature type="domain" description="THUMP" evidence="1">
    <location>
        <begin position="43"/>
        <end position="154"/>
    </location>
</feature>
<keyword id="KW-0963">Cytoplasm</keyword>
<keyword id="KW-0489">Methyltransferase</keyword>
<keyword id="KW-0694">RNA-binding</keyword>
<keyword id="KW-0698">rRNA processing</keyword>
<keyword id="KW-0949">S-adenosyl-L-methionine</keyword>
<keyword id="KW-0808">Transferase</keyword>
<reference key="1">
    <citation type="submission" date="2007-09" db="EMBL/GenBank/DDBJ databases">
        <title>Complete sequence of chromosome of Serratia proteamaculans 568.</title>
        <authorList>
            <consortium name="US DOE Joint Genome Institute"/>
            <person name="Copeland A."/>
            <person name="Lucas S."/>
            <person name="Lapidus A."/>
            <person name="Barry K."/>
            <person name="Glavina del Rio T."/>
            <person name="Dalin E."/>
            <person name="Tice H."/>
            <person name="Pitluck S."/>
            <person name="Chain P."/>
            <person name="Malfatti S."/>
            <person name="Shin M."/>
            <person name="Vergez L."/>
            <person name="Schmutz J."/>
            <person name="Larimer F."/>
            <person name="Land M."/>
            <person name="Hauser L."/>
            <person name="Kyrpides N."/>
            <person name="Kim E."/>
            <person name="Taghavi S."/>
            <person name="Newman L."/>
            <person name="Vangronsveld J."/>
            <person name="van der Lelie D."/>
            <person name="Richardson P."/>
        </authorList>
    </citation>
    <scope>NUCLEOTIDE SEQUENCE [LARGE SCALE GENOMIC DNA]</scope>
    <source>
        <strain>568</strain>
    </source>
</reference>
<evidence type="ECO:0000255" key="1">
    <source>
        <dbReference type="HAMAP-Rule" id="MF_01858"/>
    </source>
</evidence>
<comment type="function">
    <text evidence="1">Specifically methylates the guanine in position 2445 (m2G2445) and the guanine in position 2069 (m7G2069) of 23S rRNA.</text>
</comment>
<comment type="catalytic activity">
    <reaction evidence="1">
        <text>guanosine(2445) in 23S rRNA + S-adenosyl-L-methionine = N(2)-methylguanosine(2445) in 23S rRNA + S-adenosyl-L-homocysteine + H(+)</text>
        <dbReference type="Rhea" id="RHEA:42740"/>
        <dbReference type="Rhea" id="RHEA-COMP:10215"/>
        <dbReference type="Rhea" id="RHEA-COMP:10216"/>
        <dbReference type="ChEBI" id="CHEBI:15378"/>
        <dbReference type="ChEBI" id="CHEBI:57856"/>
        <dbReference type="ChEBI" id="CHEBI:59789"/>
        <dbReference type="ChEBI" id="CHEBI:74269"/>
        <dbReference type="ChEBI" id="CHEBI:74481"/>
        <dbReference type="EC" id="2.1.1.173"/>
    </reaction>
</comment>
<comment type="catalytic activity">
    <reaction evidence="1">
        <text>guanosine(2069) in 23S rRNA + S-adenosyl-L-methionine = N(2)-methylguanosine(2069) in 23S rRNA + S-adenosyl-L-homocysteine + H(+)</text>
        <dbReference type="Rhea" id="RHEA:43772"/>
        <dbReference type="Rhea" id="RHEA-COMP:10688"/>
        <dbReference type="Rhea" id="RHEA-COMP:10689"/>
        <dbReference type="ChEBI" id="CHEBI:15378"/>
        <dbReference type="ChEBI" id="CHEBI:57856"/>
        <dbReference type="ChEBI" id="CHEBI:59789"/>
        <dbReference type="ChEBI" id="CHEBI:74269"/>
        <dbReference type="ChEBI" id="CHEBI:74481"/>
        <dbReference type="EC" id="2.1.1.264"/>
    </reaction>
</comment>
<comment type="subcellular location">
    <subcellularLocation>
        <location evidence="1">Cytoplasm</location>
    </subcellularLocation>
</comment>
<comment type="similarity">
    <text evidence="1">Belongs to the methyltransferase superfamily. RlmKL family.</text>
</comment>
<accession>A8GCK7</accession>